<dbReference type="EC" id="4.2.1.33" evidence="1"/>
<dbReference type="EMBL" id="CP001029">
    <property type="protein sequence ID" value="ACB82975.1"/>
    <property type="molecule type" value="Genomic_DNA"/>
</dbReference>
<dbReference type="RefSeq" id="WP_012456573.1">
    <property type="nucleotide sequence ID" value="NC_010725.1"/>
</dbReference>
<dbReference type="SMR" id="B1ZKX6"/>
<dbReference type="STRING" id="441620.Mpop_4879"/>
<dbReference type="KEGG" id="mpo:Mpop_4879"/>
<dbReference type="eggNOG" id="COG0065">
    <property type="taxonomic scope" value="Bacteria"/>
</dbReference>
<dbReference type="HOGENOM" id="CLU_006714_3_4_5"/>
<dbReference type="OrthoDB" id="9802769at2"/>
<dbReference type="UniPathway" id="UPA00048">
    <property type="reaction ID" value="UER00071"/>
</dbReference>
<dbReference type="Proteomes" id="UP000007136">
    <property type="component" value="Chromosome"/>
</dbReference>
<dbReference type="GO" id="GO:0003861">
    <property type="term" value="F:3-isopropylmalate dehydratase activity"/>
    <property type="evidence" value="ECO:0007669"/>
    <property type="project" value="UniProtKB-UniRule"/>
</dbReference>
<dbReference type="GO" id="GO:0051539">
    <property type="term" value="F:4 iron, 4 sulfur cluster binding"/>
    <property type="evidence" value="ECO:0007669"/>
    <property type="project" value="UniProtKB-KW"/>
</dbReference>
<dbReference type="GO" id="GO:0046872">
    <property type="term" value="F:metal ion binding"/>
    <property type="evidence" value="ECO:0007669"/>
    <property type="project" value="UniProtKB-KW"/>
</dbReference>
<dbReference type="GO" id="GO:0009098">
    <property type="term" value="P:L-leucine biosynthetic process"/>
    <property type="evidence" value="ECO:0007669"/>
    <property type="project" value="UniProtKB-UniRule"/>
</dbReference>
<dbReference type="CDD" id="cd01583">
    <property type="entry name" value="IPMI"/>
    <property type="match status" value="1"/>
</dbReference>
<dbReference type="FunFam" id="3.30.499.10:FF:000006">
    <property type="entry name" value="3-isopropylmalate dehydratase large subunit"/>
    <property type="match status" value="1"/>
</dbReference>
<dbReference type="FunFam" id="3.30.499.10:FF:000007">
    <property type="entry name" value="3-isopropylmalate dehydratase large subunit"/>
    <property type="match status" value="1"/>
</dbReference>
<dbReference type="Gene3D" id="3.30.499.10">
    <property type="entry name" value="Aconitase, domain 3"/>
    <property type="match status" value="2"/>
</dbReference>
<dbReference type="HAMAP" id="MF_01026">
    <property type="entry name" value="LeuC_type1"/>
    <property type="match status" value="1"/>
</dbReference>
<dbReference type="InterPro" id="IPR004430">
    <property type="entry name" value="3-IsopropMal_deHydase_lsu"/>
</dbReference>
<dbReference type="InterPro" id="IPR015931">
    <property type="entry name" value="Acnase/IPM_dHydase_lsu_aba_1/3"/>
</dbReference>
<dbReference type="InterPro" id="IPR001030">
    <property type="entry name" value="Acoase/IPM_deHydtase_lsu_aba"/>
</dbReference>
<dbReference type="InterPro" id="IPR018136">
    <property type="entry name" value="Aconitase_4Fe-4S_BS"/>
</dbReference>
<dbReference type="InterPro" id="IPR036008">
    <property type="entry name" value="Aconitase_4Fe-4S_dom"/>
</dbReference>
<dbReference type="InterPro" id="IPR050067">
    <property type="entry name" value="IPM_dehydratase_rel_enz"/>
</dbReference>
<dbReference type="InterPro" id="IPR033941">
    <property type="entry name" value="IPMI_cat"/>
</dbReference>
<dbReference type="NCBIfam" id="TIGR00170">
    <property type="entry name" value="leuC"/>
    <property type="match status" value="1"/>
</dbReference>
<dbReference type="NCBIfam" id="NF004016">
    <property type="entry name" value="PRK05478.1"/>
    <property type="match status" value="1"/>
</dbReference>
<dbReference type="NCBIfam" id="NF009116">
    <property type="entry name" value="PRK12466.1"/>
    <property type="match status" value="1"/>
</dbReference>
<dbReference type="PANTHER" id="PTHR43822:SF9">
    <property type="entry name" value="3-ISOPROPYLMALATE DEHYDRATASE"/>
    <property type="match status" value="1"/>
</dbReference>
<dbReference type="PANTHER" id="PTHR43822">
    <property type="entry name" value="HOMOACONITASE, MITOCHONDRIAL-RELATED"/>
    <property type="match status" value="1"/>
</dbReference>
<dbReference type="Pfam" id="PF00330">
    <property type="entry name" value="Aconitase"/>
    <property type="match status" value="1"/>
</dbReference>
<dbReference type="PRINTS" id="PR00415">
    <property type="entry name" value="ACONITASE"/>
</dbReference>
<dbReference type="SUPFAM" id="SSF53732">
    <property type="entry name" value="Aconitase iron-sulfur domain"/>
    <property type="match status" value="1"/>
</dbReference>
<dbReference type="PROSITE" id="PS00450">
    <property type="entry name" value="ACONITASE_1"/>
    <property type="match status" value="1"/>
</dbReference>
<dbReference type="PROSITE" id="PS01244">
    <property type="entry name" value="ACONITASE_2"/>
    <property type="match status" value="1"/>
</dbReference>
<reference key="1">
    <citation type="submission" date="2008-04" db="EMBL/GenBank/DDBJ databases">
        <title>Complete sequence of chromosome of Methylobacterium populi BJ001.</title>
        <authorList>
            <consortium name="US DOE Joint Genome Institute"/>
            <person name="Copeland A."/>
            <person name="Lucas S."/>
            <person name="Lapidus A."/>
            <person name="Glavina del Rio T."/>
            <person name="Dalin E."/>
            <person name="Tice H."/>
            <person name="Bruce D."/>
            <person name="Goodwin L."/>
            <person name="Pitluck S."/>
            <person name="Chertkov O."/>
            <person name="Brettin T."/>
            <person name="Detter J.C."/>
            <person name="Han C."/>
            <person name="Kuske C.R."/>
            <person name="Schmutz J."/>
            <person name="Larimer F."/>
            <person name="Land M."/>
            <person name="Hauser L."/>
            <person name="Kyrpides N."/>
            <person name="Mikhailova N."/>
            <person name="Marx C."/>
            <person name="Richardson P."/>
        </authorList>
    </citation>
    <scope>NUCLEOTIDE SEQUENCE [LARGE SCALE GENOMIC DNA]</scope>
    <source>
        <strain>ATCC BAA-705 / NCIMB 13946 / BJ001</strain>
    </source>
</reference>
<keyword id="KW-0004">4Fe-4S</keyword>
<keyword id="KW-0028">Amino-acid biosynthesis</keyword>
<keyword id="KW-0100">Branched-chain amino acid biosynthesis</keyword>
<keyword id="KW-0408">Iron</keyword>
<keyword id="KW-0411">Iron-sulfur</keyword>
<keyword id="KW-0432">Leucine biosynthesis</keyword>
<keyword id="KW-0456">Lyase</keyword>
<keyword id="KW-0479">Metal-binding</keyword>
<comment type="function">
    <text evidence="1">Catalyzes the isomerization between 2-isopropylmalate and 3-isopropylmalate, via the formation of 2-isopropylmaleate.</text>
</comment>
<comment type="catalytic activity">
    <reaction evidence="1">
        <text>(2R,3S)-3-isopropylmalate = (2S)-2-isopropylmalate</text>
        <dbReference type="Rhea" id="RHEA:32287"/>
        <dbReference type="ChEBI" id="CHEBI:1178"/>
        <dbReference type="ChEBI" id="CHEBI:35121"/>
        <dbReference type="EC" id="4.2.1.33"/>
    </reaction>
</comment>
<comment type="cofactor">
    <cofactor evidence="1">
        <name>[4Fe-4S] cluster</name>
        <dbReference type="ChEBI" id="CHEBI:49883"/>
    </cofactor>
    <text evidence="1">Binds 1 [4Fe-4S] cluster per subunit.</text>
</comment>
<comment type="pathway">
    <text evidence="1">Amino-acid biosynthesis; L-leucine biosynthesis; L-leucine from 3-methyl-2-oxobutanoate: step 2/4.</text>
</comment>
<comment type="subunit">
    <text evidence="1">Heterodimer of LeuC and LeuD.</text>
</comment>
<comment type="similarity">
    <text evidence="1">Belongs to the aconitase/IPM isomerase family. LeuC type 1 subfamily.</text>
</comment>
<proteinExistence type="inferred from homology"/>
<accession>B1ZKX6</accession>
<feature type="chain" id="PRO_1000135693" description="3-isopropylmalate dehydratase large subunit">
    <location>
        <begin position="1"/>
        <end position="469"/>
    </location>
</feature>
<feature type="binding site" evidence="1">
    <location>
        <position position="349"/>
    </location>
    <ligand>
        <name>[4Fe-4S] cluster</name>
        <dbReference type="ChEBI" id="CHEBI:49883"/>
    </ligand>
</feature>
<feature type="binding site" evidence="1">
    <location>
        <position position="409"/>
    </location>
    <ligand>
        <name>[4Fe-4S] cluster</name>
        <dbReference type="ChEBI" id="CHEBI:49883"/>
    </ligand>
</feature>
<feature type="binding site" evidence="1">
    <location>
        <position position="412"/>
    </location>
    <ligand>
        <name>[4Fe-4S] cluster</name>
        <dbReference type="ChEBI" id="CHEBI:49883"/>
    </ligand>
</feature>
<sequence length="469" mass="50614">MTAPRTLYDKIWDDHVVDVGPDGSALLYIDRHLVHEVTSPQAFEGLRVAGRKVHAPHKTLAVVDHNVQTSDRSKGIEDPESRTQLEALAENVRDFGIEFYDALDRRQGIVHIIGPEQGFTLPGQTIVCGDSHTSTHGAFGALAHGIGTSEVEHVLATQTLIQRKAKNMRVTVDGTLPPGVSAKDIVLAIIGEIGTAGGTGHVIEYAGEAIRALSMEGRMTICNMSIEGGARAGMVAPDEITYAYVKDRPKAPKGAAFDAARRYWESLVSDEGAQFDREIRLDAANLPPLVSWGTSPEDIVSILGTVPDPAQIADENKRQSKEKALAYMGLTPGMRMTDITLDRVFIGSCTNGRIEDLRIVAKMVEGRKVHDGVSAMVVPGSGLVKAQAEAEGIDRILKDAGFDWREPGCSMCLGMNPDKLRPGERCASTSNRNFEGRQGPRGRTHLVSPAMAAAAAVAGRFVDIREWRG</sequence>
<name>LEUC_METPB</name>
<evidence type="ECO:0000255" key="1">
    <source>
        <dbReference type="HAMAP-Rule" id="MF_01026"/>
    </source>
</evidence>
<gene>
    <name evidence="1" type="primary">leuC</name>
    <name type="ordered locus">Mpop_4879</name>
</gene>
<protein>
    <recommendedName>
        <fullName evidence="1">3-isopropylmalate dehydratase large subunit</fullName>
        <ecNumber evidence="1">4.2.1.33</ecNumber>
    </recommendedName>
    <alternativeName>
        <fullName evidence="1">Alpha-IPM isomerase</fullName>
        <shortName evidence="1">IPMI</shortName>
    </alternativeName>
    <alternativeName>
        <fullName evidence="1">Isopropylmalate isomerase</fullName>
    </alternativeName>
</protein>
<organism>
    <name type="scientific">Methylorubrum populi (strain ATCC BAA-705 / NCIMB 13946 / BJ001)</name>
    <name type="common">Methylobacterium populi</name>
    <dbReference type="NCBI Taxonomy" id="441620"/>
    <lineage>
        <taxon>Bacteria</taxon>
        <taxon>Pseudomonadati</taxon>
        <taxon>Pseudomonadota</taxon>
        <taxon>Alphaproteobacteria</taxon>
        <taxon>Hyphomicrobiales</taxon>
        <taxon>Methylobacteriaceae</taxon>
        <taxon>Methylorubrum</taxon>
    </lineage>
</organism>